<feature type="chain" id="PRO_0000267650" description="3-octaprenyl-4-hydroxybenzoate carboxy-lyase">
    <location>
        <begin position="1"/>
        <end position="514"/>
    </location>
</feature>
<feature type="active site" description="Proton donor" evidence="1">
    <location>
        <position position="314"/>
    </location>
</feature>
<feature type="binding site" evidence="1">
    <location>
        <position position="177"/>
    </location>
    <ligand>
        <name>Mn(2+)</name>
        <dbReference type="ChEBI" id="CHEBI:29035"/>
    </ligand>
</feature>
<feature type="binding site" evidence="1">
    <location>
        <begin position="180"/>
        <end position="182"/>
    </location>
    <ligand>
        <name>prenylated FMN</name>
        <dbReference type="ChEBI" id="CHEBI:87746"/>
    </ligand>
</feature>
<feature type="binding site" evidence="1">
    <location>
        <begin position="194"/>
        <end position="196"/>
    </location>
    <ligand>
        <name>prenylated FMN</name>
        <dbReference type="ChEBI" id="CHEBI:87746"/>
    </ligand>
</feature>
<feature type="binding site" evidence="1">
    <location>
        <begin position="199"/>
        <end position="200"/>
    </location>
    <ligand>
        <name>prenylated FMN</name>
        <dbReference type="ChEBI" id="CHEBI:87746"/>
    </ligand>
</feature>
<feature type="binding site" evidence="1">
    <location>
        <position position="243"/>
    </location>
    <ligand>
        <name>Mn(2+)</name>
        <dbReference type="ChEBI" id="CHEBI:29035"/>
    </ligand>
</feature>
<sequence>MKYRDLRDFLAQLERQGELKRITAPVSTRLEMTEIADRVLRAGGPALLFENARHNDAPADMPVLANLFGTPRRVAWGMGADDVGALRETGELLASLREPEAPKGLRDALAKVSMLKAALWDMSPKTVRSAACQEIVWEGADVDLGRLPIQTCWPGDVAPLLAWGLVITRGPNARRQNLGIYRQQPLGPNKLIMRWLSHRGGALDFRDHAQAHPGKSFPIAVALGADPATILDAVTPVPDTLSEYQFAGLLRGSRTEVVKALGSDLSVPASAEIVLEGHLLPADDPRAVAAAVPEGANPPPATGYEMALEGPYGDHTGYYNEQDWFPVFTVDRITMRRNPIYHSTYTGKPPDEPAVLGVALNEVFVPLLRRQLPEIVDFYLPPEGCSYRLAVVSIRKQYAGHAKRVMFGLWSVLRQFMYTKFIVVVDEDIDPRDWTEVVWAMTTRMDPVRDTVLVENTPIDYLDFASPVSGLGGKMGLDATNKWPGETSREWGTPIHMDEAVKRRVDAMWDTLGL</sequence>
<gene>
    <name evidence="1" type="primary">ubiD</name>
    <name type="ordered locus">BPP1156</name>
</gene>
<protein>
    <recommendedName>
        <fullName evidence="1">3-octaprenyl-4-hydroxybenzoate carboxy-lyase</fullName>
        <ecNumber evidence="1">4.1.1.98</ecNumber>
    </recommendedName>
    <alternativeName>
        <fullName evidence="1">Polyprenyl p-hydroxybenzoate decarboxylase</fullName>
    </alternativeName>
</protein>
<accession>Q7WB52</accession>
<name>UBID_BORPA</name>
<dbReference type="EC" id="4.1.1.98" evidence="1"/>
<dbReference type="EMBL" id="BX640426">
    <property type="protein sequence ID" value="CAE36457.1"/>
    <property type="molecule type" value="Genomic_DNA"/>
</dbReference>
<dbReference type="RefSeq" id="WP_010927883.1">
    <property type="nucleotide sequence ID" value="NC_002928.3"/>
</dbReference>
<dbReference type="SMR" id="Q7WB52"/>
<dbReference type="GeneID" id="93202911"/>
<dbReference type="KEGG" id="bpa:BPP1156"/>
<dbReference type="HOGENOM" id="CLU_023348_4_1_4"/>
<dbReference type="UniPathway" id="UPA00232"/>
<dbReference type="Proteomes" id="UP000001421">
    <property type="component" value="Chromosome"/>
</dbReference>
<dbReference type="GO" id="GO:0005829">
    <property type="term" value="C:cytosol"/>
    <property type="evidence" value="ECO:0007669"/>
    <property type="project" value="TreeGrafter"/>
</dbReference>
<dbReference type="GO" id="GO:0005886">
    <property type="term" value="C:plasma membrane"/>
    <property type="evidence" value="ECO:0007669"/>
    <property type="project" value="UniProtKB-SubCell"/>
</dbReference>
<dbReference type="GO" id="GO:0008694">
    <property type="term" value="F:3-octaprenyl-4-hydroxybenzoate carboxy-lyase activity"/>
    <property type="evidence" value="ECO:0007669"/>
    <property type="project" value="UniProtKB-UniRule"/>
</dbReference>
<dbReference type="GO" id="GO:0046872">
    <property type="term" value="F:metal ion binding"/>
    <property type="evidence" value="ECO:0007669"/>
    <property type="project" value="UniProtKB-KW"/>
</dbReference>
<dbReference type="GO" id="GO:0006744">
    <property type="term" value="P:ubiquinone biosynthetic process"/>
    <property type="evidence" value="ECO:0007669"/>
    <property type="project" value="UniProtKB-UniRule"/>
</dbReference>
<dbReference type="FunFam" id="1.20.5.570:FF:000001">
    <property type="entry name" value="3-octaprenyl-4-hydroxybenzoate carboxy-lyase"/>
    <property type="match status" value="1"/>
</dbReference>
<dbReference type="FunFam" id="3.40.1670.10:FF:000001">
    <property type="entry name" value="3-octaprenyl-4-hydroxybenzoate carboxy-lyase"/>
    <property type="match status" value="1"/>
</dbReference>
<dbReference type="Gene3D" id="1.20.5.570">
    <property type="entry name" value="Single helix bin"/>
    <property type="match status" value="1"/>
</dbReference>
<dbReference type="Gene3D" id="3.40.1670.10">
    <property type="entry name" value="UbiD C-terminal domain-like"/>
    <property type="match status" value="1"/>
</dbReference>
<dbReference type="HAMAP" id="MF_01636">
    <property type="entry name" value="UbiD"/>
    <property type="match status" value="1"/>
</dbReference>
<dbReference type="InterPro" id="IPR002830">
    <property type="entry name" value="UbiD"/>
</dbReference>
<dbReference type="InterPro" id="IPR049381">
    <property type="entry name" value="UbiD-like_C"/>
</dbReference>
<dbReference type="InterPro" id="IPR049383">
    <property type="entry name" value="UbiD-like_N"/>
</dbReference>
<dbReference type="InterPro" id="IPR023677">
    <property type="entry name" value="UbiD_bacteria"/>
</dbReference>
<dbReference type="InterPro" id="IPR048304">
    <property type="entry name" value="UbiD_Rift_dom"/>
</dbReference>
<dbReference type="NCBIfam" id="TIGR00148">
    <property type="entry name" value="UbiD family decarboxylase"/>
    <property type="match status" value="2"/>
</dbReference>
<dbReference type="PANTHER" id="PTHR30108">
    <property type="entry name" value="3-OCTAPRENYL-4-HYDROXYBENZOATE CARBOXY-LYASE-RELATED"/>
    <property type="match status" value="1"/>
</dbReference>
<dbReference type="PANTHER" id="PTHR30108:SF17">
    <property type="entry name" value="FERULIC ACID DECARBOXYLASE 1"/>
    <property type="match status" value="1"/>
</dbReference>
<dbReference type="Pfam" id="PF01977">
    <property type="entry name" value="UbiD"/>
    <property type="match status" value="1"/>
</dbReference>
<dbReference type="Pfam" id="PF20696">
    <property type="entry name" value="UbiD_C"/>
    <property type="match status" value="1"/>
</dbReference>
<dbReference type="Pfam" id="PF20695">
    <property type="entry name" value="UbiD_N"/>
    <property type="match status" value="1"/>
</dbReference>
<dbReference type="SUPFAM" id="SSF50475">
    <property type="entry name" value="FMN-binding split barrel"/>
    <property type="match status" value="1"/>
</dbReference>
<dbReference type="SUPFAM" id="SSF143968">
    <property type="entry name" value="UbiD C-terminal domain-like"/>
    <property type="match status" value="1"/>
</dbReference>
<reference key="1">
    <citation type="journal article" date="2003" name="Nat. Genet.">
        <title>Comparative analysis of the genome sequences of Bordetella pertussis, Bordetella parapertussis and Bordetella bronchiseptica.</title>
        <authorList>
            <person name="Parkhill J."/>
            <person name="Sebaihia M."/>
            <person name="Preston A."/>
            <person name="Murphy L.D."/>
            <person name="Thomson N.R."/>
            <person name="Harris D.E."/>
            <person name="Holden M.T.G."/>
            <person name="Churcher C.M."/>
            <person name="Bentley S.D."/>
            <person name="Mungall K.L."/>
            <person name="Cerdeno-Tarraga A.-M."/>
            <person name="Temple L."/>
            <person name="James K.D."/>
            <person name="Harris B."/>
            <person name="Quail M.A."/>
            <person name="Achtman M."/>
            <person name="Atkin R."/>
            <person name="Baker S."/>
            <person name="Basham D."/>
            <person name="Bason N."/>
            <person name="Cherevach I."/>
            <person name="Chillingworth T."/>
            <person name="Collins M."/>
            <person name="Cronin A."/>
            <person name="Davis P."/>
            <person name="Doggett J."/>
            <person name="Feltwell T."/>
            <person name="Goble A."/>
            <person name="Hamlin N."/>
            <person name="Hauser H."/>
            <person name="Holroyd S."/>
            <person name="Jagels K."/>
            <person name="Leather S."/>
            <person name="Moule S."/>
            <person name="Norberczak H."/>
            <person name="O'Neil S."/>
            <person name="Ormond D."/>
            <person name="Price C."/>
            <person name="Rabbinowitsch E."/>
            <person name="Rutter S."/>
            <person name="Sanders M."/>
            <person name="Saunders D."/>
            <person name="Seeger K."/>
            <person name="Sharp S."/>
            <person name="Simmonds M."/>
            <person name="Skelton J."/>
            <person name="Squares R."/>
            <person name="Squares S."/>
            <person name="Stevens K."/>
            <person name="Unwin L."/>
            <person name="Whitehead S."/>
            <person name="Barrell B.G."/>
            <person name="Maskell D.J."/>
        </authorList>
    </citation>
    <scope>NUCLEOTIDE SEQUENCE [LARGE SCALE GENOMIC DNA]</scope>
    <source>
        <strain>12822 / ATCC BAA-587 / NCTC 13253</strain>
    </source>
</reference>
<comment type="function">
    <text evidence="1">Catalyzes the decarboxylation of 3-octaprenyl-4-hydroxy benzoate to 2-octaprenylphenol, an intermediate step in ubiquinone biosynthesis.</text>
</comment>
<comment type="catalytic activity">
    <reaction evidence="1">
        <text>a 4-hydroxy-3-(all-trans-polyprenyl)benzoate + H(+) = a 2-(all-trans-polyprenyl)phenol + CO2</text>
        <dbReference type="Rhea" id="RHEA:41680"/>
        <dbReference type="Rhea" id="RHEA-COMP:9514"/>
        <dbReference type="Rhea" id="RHEA-COMP:9516"/>
        <dbReference type="ChEBI" id="CHEBI:1269"/>
        <dbReference type="ChEBI" id="CHEBI:15378"/>
        <dbReference type="ChEBI" id="CHEBI:16526"/>
        <dbReference type="ChEBI" id="CHEBI:78396"/>
        <dbReference type="EC" id="4.1.1.98"/>
    </reaction>
</comment>
<comment type="cofactor">
    <cofactor evidence="1">
        <name>prenylated FMN</name>
        <dbReference type="ChEBI" id="CHEBI:87746"/>
    </cofactor>
    <text evidence="1">Binds 1 prenylated FMN per subunit.</text>
</comment>
<comment type="cofactor">
    <cofactor evidence="1">
        <name>Mn(2+)</name>
        <dbReference type="ChEBI" id="CHEBI:29035"/>
    </cofactor>
</comment>
<comment type="pathway">
    <text evidence="1">Cofactor biosynthesis; ubiquinone biosynthesis.</text>
</comment>
<comment type="subunit">
    <text evidence="1">Homohexamer.</text>
</comment>
<comment type="subcellular location">
    <subcellularLocation>
        <location evidence="1">Cell membrane</location>
        <topology evidence="1">Peripheral membrane protein</topology>
    </subcellularLocation>
</comment>
<comment type="similarity">
    <text evidence="1">Belongs to the UbiD family.</text>
</comment>
<evidence type="ECO:0000255" key="1">
    <source>
        <dbReference type="HAMAP-Rule" id="MF_01636"/>
    </source>
</evidence>
<keyword id="KW-1003">Cell membrane</keyword>
<keyword id="KW-0210">Decarboxylase</keyword>
<keyword id="KW-0285">Flavoprotein</keyword>
<keyword id="KW-0288">FMN</keyword>
<keyword id="KW-0456">Lyase</keyword>
<keyword id="KW-0464">Manganese</keyword>
<keyword id="KW-0472">Membrane</keyword>
<keyword id="KW-0479">Metal-binding</keyword>
<keyword id="KW-0831">Ubiquinone biosynthesis</keyword>
<proteinExistence type="inferred from homology"/>
<organism>
    <name type="scientific">Bordetella parapertussis (strain 12822 / ATCC BAA-587 / NCTC 13253)</name>
    <dbReference type="NCBI Taxonomy" id="257311"/>
    <lineage>
        <taxon>Bacteria</taxon>
        <taxon>Pseudomonadati</taxon>
        <taxon>Pseudomonadota</taxon>
        <taxon>Betaproteobacteria</taxon>
        <taxon>Burkholderiales</taxon>
        <taxon>Alcaligenaceae</taxon>
        <taxon>Bordetella</taxon>
    </lineage>
</organism>